<reference key="1">
    <citation type="journal article" date="2007" name="J. Bacteriol.">
        <title>The complete genome sequence of Roseobacter denitrificans reveals a mixotrophic rather than photosynthetic metabolism.</title>
        <authorList>
            <person name="Swingley W.D."/>
            <person name="Sadekar S."/>
            <person name="Mastrian S.D."/>
            <person name="Matthies H.J."/>
            <person name="Hao J."/>
            <person name="Ramos H."/>
            <person name="Acharya C.R."/>
            <person name="Conrad A.L."/>
            <person name="Taylor H.L."/>
            <person name="Dejesa L.C."/>
            <person name="Shah M.K."/>
            <person name="O'Huallachain M.E."/>
            <person name="Lince M.T."/>
            <person name="Blankenship R.E."/>
            <person name="Beatty J.T."/>
            <person name="Touchman J.W."/>
        </authorList>
    </citation>
    <scope>NUCLEOTIDE SEQUENCE [LARGE SCALE GENOMIC DNA]</scope>
    <source>
        <strain>ATCC 33942 / OCh 114</strain>
    </source>
</reference>
<evidence type="ECO:0000255" key="1">
    <source>
        <dbReference type="HAMAP-Rule" id="MF_00651"/>
    </source>
</evidence>
<accession>Q169F8</accession>
<proteinExistence type="inferred from homology"/>
<feature type="chain" id="PRO_0000257583" description="Putative pre-16S rRNA nuclease">
    <location>
        <begin position="1"/>
        <end position="163"/>
    </location>
</feature>
<gene>
    <name type="ordered locus">RD1_1766</name>
</gene>
<dbReference type="EC" id="3.1.-.-" evidence="1"/>
<dbReference type="EMBL" id="CP000362">
    <property type="protein sequence ID" value="ABG31385.1"/>
    <property type="molecule type" value="Genomic_DNA"/>
</dbReference>
<dbReference type="RefSeq" id="WP_011568004.1">
    <property type="nucleotide sequence ID" value="NC_008209.1"/>
</dbReference>
<dbReference type="SMR" id="Q169F8"/>
<dbReference type="STRING" id="375451.RD1_1766"/>
<dbReference type="KEGG" id="rde:RD1_1766"/>
<dbReference type="eggNOG" id="COG0816">
    <property type="taxonomic scope" value="Bacteria"/>
</dbReference>
<dbReference type="HOGENOM" id="CLU_098240_1_1_5"/>
<dbReference type="OrthoDB" id="9796140at2"/>
<dbReference type="Proteomes" id="UP000007029">
    <property type="component" value="Chromosome"/>
</dbReference>
<dbReference type="GO" id="GO:0005829">
    <property type="term" value="C:cytosol"/>
    <property type="evidence" value="ECO:0007669"/>
    <property type="project" value="TreeGrafter"/>
</dbReference>
<dbReference type="GO" id="GO:0004518">
    <property type="term" value="F:nuclease activity"/>
    <property type="evidence" value="ECO:0007669"/>
    <property type="project" value="UniProtKB-KW"/>
</dbReference>
<dbReference type="GO" id="GO:0000967">
    <property type="term" value="P:rRNA 5'-end processing"/>
    <property type="evidence" value="ECO:0007669"/>
    <property type="project" value="UniProtKB-UniRule"/>
</dbReference>
<dbReference type="CDD" id="cd16964">
    <property type="entry name" value="YqgF"/>
    <property type="match status" value="1"/>
</dbReference>
<dbReference type="Gene3D" id="3.30.420.140">
    <property type="entry name" value="YqgF/RNase H-like domain"/>
    <property type="match status" value="1"/>
</dbReference>
<dbReference type="HAMAP" id="MF_00651">
    <property type="entry name" value="Nuclease_YqgF"/>
    <property type="match status" value="1"/>
</dbReference>
<dbReference type="InterPro" id="IPR012337">
    <property type="entry name" value="RNaseH-like_sf"/>
</dbReference>
<dbReference type="InterPro" id="IPR005227">
    <property type="entry name" value="YqgF"/>
</dbReference>
<dbReference type="InterPro" id="IPR006641">
    <property type="entry name" value="YqgF/RNaseH-like_dom"/>
</dbReference>
<dbReference type="InterPro" id="IPR037027">
    <property type="entry name" value="YqgF/RNaseH-like_dom_sf"/>
</dbReference>
<dbReference type="NCBIfam" id="TIGR00250">
    <property type="entry name" value="RNAse_H_YqgF"/>
    <property type="match status" value="1"/>
</dbReference>
<dbReference type="PANTHER" id="PTHR33317">
    <property type="entry name" value="POLYNUCLEOTIDYL TRANSFERASE, RIBONUCLEASE H-LIKE SUPERFAMILY PROTEIN"/>
    <property type="match status" value="1"/>
</dbReference>
<dbReference type="PANTHER" id="PTHR33317:SF4">
    <property type="entry name" value="POLYNUCLEOTIDYL TRANSFERASE, RIBONUCLEASE H-LIKE SUPERFAMILY PROTEIN"/>
    <property type="match status" value="1"/>
</dbReference>
<dbReference type="Pfam" id="PF03652">
    <property type="entry name" value="RuvX"/>
    <property type="match status" value="1"/>
</dbReference>
<dbReference type="SMART" id="SM00732">
    <property type="entry name" value="YqgFc"/>
    <property type="match status" value="1"/>
</dbReference>
<dbReference type="SUPFAM" id="SSF53098">
    <property type="entry name" value="Ribonuclease H-like"/>
    <property type="match status" value="1"/>
</dbReference>
<protein>
    <recommendedName>
        <fullName evidence="1">Putative pre-16S rRNA nuclease</fullName>
        <ecNumber evidence="1">3.1.-.-</ecNumber>
    </recommendedName>
</protein>
<sequence length="163" mass="17896">MILEDTADFLAALPSMRSLMGLDLGTQTIGVAVSDTFLSVATPLETVKRRKFTLDAARLSDIVAQRRLGGLVLGLPRNMDGSEGPRCQSTRAFARNLDKSIGSDLPITFWDERLSTVAAERALLEADTSRKRRAEVIDHVAAAYILQGALDRIRVIRAEQDQE</sequence>
<organism>
    <name type="scientific">Roseobacter denitrificans (strain ATCC 33942 / OCh 114)</name>
    <name type="common">Erythrobacter sp. (strain OCh 114)</name>
    <name type="synonym">Roseobacter denitrificans</name>
    <dbReference type="NCBI Taxonomy" id="375451"/>
    <lineage>
        <taxon>Bacteria</taxon>
        <taxon>Pseudomonadati</taxon>
        <taxon>Pseudomonadota</taxon>
        <taxon>Alphaproteobacteria</taxon>
        <taxon>Rhodobacterales</taxon>
        <taxon>Roseobacteraceae</taxon>
        <taxon>Roseobacter</taxon>
    </lineage>
</organism>
<keyword id="KW-0963">Cytoplasm</keyword>
<keyword id="KW-0378">Hydrolase</keyword>
<keyword id="KW-0540">Nuclease</keyword>
<keyword id="KW-1185">Reference proteome</keyword>
<keyword id="KW-0690">Ribosome biogenesis</keyword>
<comment type="function">
    <text evidence="1">Could be a nuclease involved in processing of the 5'-end of pre-16S rRNA.</text>
</comment>
<comment type="subcellular location">
    <subcellularLocation>
        <location evidence="1">Cytoplasm</location>
    </subcellularLocation>
</comment>
<comment type="similarity">
    <text evidence="1">Belongs to the YqgF nuclease family.</text>
</comment>
<name>YQGF_ROSDO</name>